<organism>
    <name type="scientific">Homo sapiens</name>
    <name type="common">Human</name>
    <dbReference type="NCBI Taxonomy" id="9606"/>
    <lineage>
        <taxon>Eukaryota</taxon>
        <taxon>Metazoa</taxon>
        <taxon>Chordata</taxon>
        <taxon>Craniata</taxon>
        <taxon>Vertebrata</taxon>
        <taxon>Euteleostomi</taxon>
        <taxon>Mammalia</taxon>
        <taxon>Eutheria</taxon>
        <taxon>Euarchontoglires</taxon>
        <taxon>Primates</taxon>
        <taxon>Haplorrhini</taxon>
        <taxon>Catarrhini</taxon>
        <taxon>Hominidae</taxon>
        <taxon>Homo</taxon>
    </lineage>
</organism>
<keyword id="KW-0963">Cytoplasm</keyword>
<keyword id="KW-0225">Disease variant</keyword>
<keyword id="KW-0967">Endosome</keyword>
<keyword id="KW-0991">Intellectual disability</keyword>
<keyword id="KW-1267">Proteomics identification</keyword>
<keyword id="KW-1185">Reference proteome</keyword>
<dbReference type="EMBL" id="AJ272205">
    <property type="protein sequence ID" value="CAC01126.1"/>
    <property type="molecule type" value="mRNA"/>
</dbReference>
<dbReference type="EMBL" id="AL834377">
    <property type="protein sequence ID" value="CAD39040.1"/>
    <property type="molecule type" value="mRNA"/>
</dbReference>
<dbReference type="EMBL" id="BX641128">
    <property type="protein sequence ID" value="CAE46058.1"/>
    <property type="molecule type" value="mRNA"/>
</dbReference>
<dbReference type="EMBL" id="CH471116">
    <property type="protein sequence ID" value="EAW88845.1"/>
    <property type="molecule type" value="Genomic_DNA"/>
</dbReference>
<dbReference type="EMBL" id="CH471116">
    <property type="protein sequence ID" value="EAW88846.1"/>
    <property type="molecule type" value="Genomic_DNA"/>
</dbReference>
<dbReference type="EMBL" id="BC016908">
    <property type="protein sequence ID" value="AAH16908.1"/>
    <property type="molecule type" value="mRNA"/>
</dbReference>
<dbReference type="CCDS" id="CCDS8528.1"/>
<dbReference type="RefSeq" id="NP_001291740.1">
    <property type="nucleotide sequence ID" value="NM_001304811.2"/>
</dbReference>
<dbReference type="RefSeq" id="NP_065107.1">
    <property type="nucleotide sequence ID" value="NM_020374.4"/>
</dbReference>
<dbReference type="SMR" id="Q9NQ89"/>
<dbReference type="BioGRID" id="121368">
    <property type="interactions" value="18"/>
</dbReference>
<dbReference type="ComplexPortal" id="CPX-2540">
    <property type="entry name" value="FERRY RAB5 effector complex"/>
</dbReference>
<dbReference type="FunCoup" id="Q9NQ89">
    <property type="interactions" value="2782"/>
</dbReference>
<dbReference type="IntAct" id="Q9NQ89">
    <property type="interactions" value="19"/>
</dbReference>
<dbReference type="STRING" id="9606.ENSP00000261250"/>
<dbReference type="iPTMnet" id="Q9NQ89"/>
<dbReference type="PhosphoSitePlus" id="Q9NQ89"/>
<dbReference type="BioMuta" id="C12orf4"/>
<dbReference type="DMDM" id="71153007"/>
<dbReference type="jPOST" id="Q9NQ89"/>
<dbReference type="MassIVE" id="Q9NQ89"/>
<dbReference type="PaxDb" id="9606-ENSP00000261250"/>
<dbReference type="PeptideAtlas" id="Q9NQ89"/>
<dbReference type="ProteomicsDB" id="82107"/>
<dbReference type="Pumba" id="Q9NQ89"/>
<dbReference type="Antibodypedia" id="41818">
    <property type="antibodies" value="84 antibodies from 15 providers"/>
</dbReference>
<dbReference type="DNASU" id="57102"/>
<dbReference type="Ensembl" id="ENST00000261250.8">
    <property type="protein sequence ID" value="ENSP00000261250.3"/>
    <property type="gene ID" value="ENSG00000047621.12"/>
</dbReference>
<dbReference type="Ensembl" id="ENST00000545746.5">
    <property type="protein sequence ID" value="ENSP00000439996.1"/>
    <property type="gene ID" value="ENSG00000047621.12"/>
</dbReference>
<dbReference type="GeneID" id="57102"/>
<dbReference type="KEGG" id="hsa:57102"/>
<dbReference type="MANE-Select" id="ENST00000261250.8">
    <property type="protein sequence ID" value="ENSP00000261250.3"/>
    <property type="RefSeq nucleotide sequence ID" value="NM_020374.4"/>
    <property type="RefSeq protein sequence ID" value="NP_065107.1"/>
</dbReference>
<dbReference type="UCSC" id="uc001qms.4">
    <property type="organism name" value="human"/>
</dbReference>
<dbReference type="AGR" id="HGNC:1184"/>
<dbReference type="CTD" id="57102"/>
<dbReference type="DisGeNET" id="57102"/>
<dbReference type="GeneCards" id="FERRY3"/>
<dbReference type="HGNC" id="HGNC:1184">
    <property type="gene designation" value="FERRY3"/>
</dbReference>
<dbReference type="HPA" id="ENSG00000047621">
    <property type="expression patterns" value="Low tissue specificity"/>
</dbReference>
<dbReference type="MalaCards" id="FERRY3"/>
<dbReference type="MIM" id="616082">
    <property type="type" value="gene"/>
</dbReference>
<dbReference type="MIM" id="618221">
    <property type="type" value="phenotype"/>
</dbReference>
<dbReference type="neXtProt" id="NX_Q9NQ89"/>
<dbReference type="OpenTargets" id="ENSG00000047621"/>
<dbReference type="Orphanet" id="88616">
    <property type="disease" value="Autosomal recessive non-syndromic intellectual disability"/>
</dbReference>
<dbReference type="PharmGKB" id="PA25505"/>
<dbReference type="VEuPathDB" id="HostDB:ENSG00000047621"/>
<dbReference type="eggNOG" id="KOG4506">
    <property type="taxonomic scope" value="Eukaryota"/>
</dbReference>
<dbReference type="GeneTree" id="ENSGT00390000010229"/>
<dbReference type="HOGENOM" id="CLU_036084_0_0_1"/>
<dbReference type="InParanoid" id="Q9NQ89"/>
<dbReference type="OMA" id="CKHKRSH"/>
<dbReference type="OrthoDB" id="415359at2759"/>
<dbReference type="PAN-GO" id="Q9NQ89">
    <property type="GO annotations" value="2 GO annotations based on evolutionary models"/>
</dbReference>
<dbReference type="PhylomeDB" id="Q9NQ89"/>
<dbReference type="TreeFam" id="TF314243"/>
<dbReference type="PathwayCommons" id="Q9NQ89"/>
<dbReference type="SignaLink" id="Q9NQ89"/>
<dbReference type="BioGRID-ORCS" id="57102">
    <property type="hits" value="22 hits in 1141 CRISPR screens"/>
</dbReference>
<dbReference type="ChiTaRS" id="C12orf4">
    <property type="organism name" value="human"/>
</dbReference>
<dbReference type="GenomeRNAi" id="57102"/>
<dbReference type="Pharos" id="Q9NQ89">
    <property type="development level" value="Tdark"/>
</dbReference>
<dbReference type="PRO" id="PR:Q9NQ89"/>
<dbReference type="Proteomes" id="UP000005640">
    <property type="component" value="Chromosome 12"/>
</dbReference>
<dbReference type="RNAct" id="Q9NQ89">
    <property type="molecule type" value="protein"/>
</dbReference>
<dbReference type="Bgee" id="ENSG00000047621">
    <property type="expression patterns" value="Expressed in tendon of biceps brachii and 202 other cell types or tissues"/>
</dbReference>
<dbReference type="ExpressionAtlas" id="Q9NQ89">
    <property type="expression patterns" value="baseline and differential"/>
</dbReference>
<dbReference type="GO" id="GO:0005737">
    <property type="term" value="C:cytoplasm"/>
    <property type="evidence" value="ECO:0000250"/>
    <property type="project" value="UniProtKB"/>
</dbReference>
<dbReference type="GO" id="GO:0005769">
    <property type="term" value="C:early endosome"/>
    <property type="evidence" value="ECO:0000314"/>
    <property type="project" value="UniProtKB"/>
</dbReference>
<dbReference type="GO" id="GO:0032991">
    <property type="term" value="C:protein-containing complex"/>
    <property type="evidence" value="ECO:0000353"/>
    <property type="project" value="UniProtKB"/>
</dbReference>
<dbReference type="GO" id="GO:0043304">
    <property type="term" value="P:regulation of mast cell degranulation"/>
    <property type="evidence" value="ECO:0000250"/>
    <property type="project" value="UniProtKB"/>
</dbReference>
<dbReference type="InterPro" id="IPR019311">
    <property type="entry name" value="Fy-3"/>
</dbReference>
<dbReference type="PANTHER" id="PTHR16525">
    <property type="entry name" value="PROTEIN C12ORF4"/>
    <property type="match status" value="1"/>
</dbReference>
<dbReference type="PANTHER" id="PTHR16525:SF0">
    <property type="entry name" value="PROTEIN C12ORF4"/>
    <property type="match status" value="1"/>
</dbReference>
<dbReference type="Pfam" id="PF10154">
    <property type="entry name" value="Fy-3"/>
    <property type="match status" value="1"/>
</dbReference>
<proteinExistence type="evidence at protein level"/>
<reference key="1">
    <citation type="journal article" date="2000" name="Nat. Genet.">
        <title>Autosomal dominant hypophosphataemic rickets is associated with mutations in FGF23.</title>
        <authorList>
            <person name="White K.E."/>
            <person name="Evans W.E."/>
            <person name="O'Riordan J.L.H."/>
            <person name="Speer M.C."/>
            <person name="Econs M.J."/>
            <person name="Lorenz-Depiereux B."/>
            <person name="Grabowski M."/>
            <person name="Meitinger T."/>
            <person name="Strom T.M."/>
        </authorList>
    </citation>
    <scope>NUCLEOTIDE SEQUENCE [MRNA]</scope>
    <source>
        <tissue>Retina</tissue>
    </source>
</reference>
<reference key="2">
    <citation type="journal article" date="2007" name="BMC Genomics">
        <title>The full-ORF clone resource of the German cDNA consortium.</title>
        <authorList>
            <person name="Bechtel S."/>
            <person name="Rosenfelder H."/>
            <person name="Duda A."/>
            <person name="Schmidt C.P."/>
            <person name="Ernst U."/>
            <person name="Wellenreuther R."/>
            <person name="Mehrle A."/>
            <person name="Schuster C."/>
            <person name="Bahr A."/>
            <person name="Bloecker H."/>
            <person name="Heubner D."/>
            <person name="Hoerlein A."/>
            <person name="Michel G."/>
            <person name="Wedler H."/>
            <person name="Koehrer K."/>
            <person name="Ottenwaelder B."/>
            <person name="Poustka A."/>
            <person name="Wiemann S."/>
            <person name="Schupp I."/>
        </authorList>
    </citation>
    <scope>NUCLEOTIDE SEQUENCE [LARGE SCALE MRNA]</scope>
    <source>
        <tissue>Liver</tissue>
        <tissue>Melanoma</tissue>
    </source>
</reference>
<reference key="3">
    <citation type="submission" date="2005-09" db="EMBL/GenBank/DDBJ databases">
        <authorList>
            <person name="Mural R.J."/>
            <person name="Istrail S."/>
            <person name="Sutton G.G."/>
            <person name="Florea L."/>
            <person name="Halpern A.L."/>
            <person name="Mobarry C.M."/>
            <person name="Lippert R."/>
            <person name="Walenz B."/>
            <person name="Shatkay H."/>
            <person name="Dew I."/>
            <person name="Miller J.R."/>
            <person name="Flanigan M.J."/>
            <person name="Edwards N.J."/>
            <person name="Bolanos R."/>
            <person name="Fasulo D."/>
            <person name="Halldorsson B.V."/>
            <person name="Hannenhalli S."/>
            <person name="Turner R."/>
            <person name="Yooseph S."/>
            <person name="Lu F."/>
            <person name="Nusskern D.R."/>
            <person name="Shue B.C."/>
            <person name="Zheng X.H."/>
            <person name="Zhong F."/>
            <person name="Delcher A.L."/>
            <person name="Huson D.H."/>
            <person name="Kravitz S.A."/>
            <person name="Mouchard L."/>
            <person name="Reinert K."/>
            <person name="Remington K.A."/>
            <person name="Clark A.G."/>
            <person name="Waterman M.S."/>
            <person name="Eichler E.E."/>
            <person name="Adams M.D."/>
            <person name="Hunkapiller M.W."/>
            <person name="Myers E.W."/>
            <person name="Venter J.C."/>
        </authorList>
    </citation>
    <scope>NUCLEOTIDE SEQUENCE [LARGE SCALE GENOMIC DNA]</scope>
</reference>
<reference key="4">
    <citation type="journal article" date="2004" name="Genome Res.">
        <title>The status, quality, and expansion of the NIH full-length cDNA project: the Mammalian Gene Collection (MGC).</title>
        <authorList>
            <consortium name="The MGC Project Team"/>
        </authorList>
    </citation>
    <scope>NUCLEOTIDE SEQUENCE [LARGE SCALE MRNA]</scope>
    <source>
        <tissue>Mammary gland</tissue>
    </source>
</reference>
<reference key="5">
    <citation type="journal article" date="2015" name="Cell Rep.">
        <title>Accelerating novel candidate gene discovery in neurogenetic disorders via whole-exome sequencing of prescreened multiplex consanguineous families.</title>
        <authorList>
            <person name="Alazami A.M."/>
            <person name="Patel N."/>
            <person name="Shamseldin H.E."/>
            <person name="Anazi S."/>
            <person name="Al-Dosari M.S."/>
            <person name="Alzahrani F."/>
            <person name="Hijazi H."/>
            <person name="Alshammari M."/>
            <person name="Aldahmesh M.A."/>
            <person name="Salih M.A."/>
            <person name="Faqeih E."/>
            <person name="Alhashem A."/>
            <person name="Bashiri F.A."/>
            <person name="Al-Owain M."/>
            <person name="Kentab A.Y."/>
            <person name="Sogaty S."/>
            <person name="Al Tala S."/>
            <person name="Temsah M.H."/>
            <person name="Tulbah M."/>
            <person name="Aljelaify R.F."/>
            <person name="Alshahwan S.A."/>
            <person name="Seidahmed M.Z."/>
            <person name="Alhadid A.A."/>
            <person name="Aldhalaan H."/>
            <person name="Alqallaf F."/>
            <person name="Kurdi W."/>
            <person name="Alfadhel M."/>
            <person name="Babay Z."/>
            <person name="Alsogheer M."/>
            <person name="Kaya N."/>
            <person name="Al-Hassnan Z.N."/>
            <person name="Abdel-Salam G.M."/>
            <person name="Al-Sannaa N."/>
            <person name="Al Mutairi F."/>
            <person name="El Khashab H.Y."/>
            <person name="Bohlega S."/>
            <person name="Jia X."/>
            <person name="Nguyen H.C."/>
            <person name="Hammami R."/>
            <person name="Adly N."/>
            <person name="Mohamed J.Y."/>
            <person name="Abdulwahab F."/>
            <person name="Ibrahim N."/>
            <person name="Naim E.A."/>
            <person name="Al-Younes B."/>
            <person name="Meyer B.F."/>
            <person name="Hashem M."/>
            <person name="Shaheen R."/>
            <person name="Xiong Y."/>
            <person name="Abouelhoda M."/>
            <person name="Aldeeri A.A."/>
            <person name="Monies D.M."/>
            <person name="Alkuraya F.S."/>
        </authorList>
    </citation>
    <scope>INVOLVEMENT IN MRT66</scope>
</reference>
<reference key="6">
    <citation type="journal article" date="2017" name="Clin. Genet.">
        <title>Identification of C12orf4 as a gene for autosomal recessive intellectual disability.</title>
        <authorList>
            <person name="Philips A.K."/>
            <person name="Pinelli M."/>
            <person name="de Bie C.I."/>
            <person name="Mustonen A."/>
            <person name="Maeaettae T."/>
            <person name="Arts H.H."/>
            <person name="Wu K."/>
            <person name="Roepman R."/>
            <person name="Moilanen J.S."/>
            <person name="Raza S."/>
            <person name="Varilo T."/>
            <person name="Scala G."/>
            <person name="Cocozza S."/>
            <person name="Gilissen C."/>
            <person name="van Gassen K.L."/>
            <person name="Jaervelae I."/>
        </authorList>
    </citation>
    <scope>INVOLVEMENT IN MRT66</scope>
    <scope>VARIANT MRT66 PRO-328</scope>
</reference>
<reference key="7">
    <citation type="journal article" date="2017" name="JAMA Psychiatry">
        <title>Diagnostic yield and novel candidate genes by exome sequencing in 152 consanguineous families with neurodevelopmental disorders.</title>
        <authorList>
            <person name="Reuter M.S."/>
            <person name="Tawamie H."/>
            <person name="Buchert R."/>
            <person name="Hosny Gebril O."/>
            <person name="Froukh T."/>
            <person name="Thiel C."/>
            <person name="Uebe S."/>
            <person name="Ekici A.B."/>
            <person name="Krumbiegel M."/>
            <person name="Zweier C."/>
            <person name="Hoyer J."/>
            <person name="Eberlein K."/>
            <person name="Bauer J."/>
            <person name="Scheller U."/>
            <person name="Strom T.M."/>
            <person name="Hoffjan S."/>
            <person name="Abdelraouf E.R."/>
            <person name="Meguid N.A."/>
            <person name="Abboud A."/>
            <person name="Al Khateeb M.A."/>
            <person name="Fakher M."/>
            <person name="Hamdan S."/>
            <person name="Ismael A."/>
            <person name="Muhammad S."/>
            <person name="Abdallah E."/>
            <person name="Sticht H."/>
            <person name="Wieczorek D."/>
            <person name="Reis A."/>
            <person name="Abou Jamra R."/>
        </authorList>
    </citation>
    <scope>INVOLVEMENT IN MRT66</scope>
    <scope>VARIANT MRT66 454-ARG--HIS-552 DEL</scope>
</reference>
<reference key="8">
    <citation type="journal article" date="2023" name="Mol. Cell">
        <title>The Rab5 effector FERRY links early endosomes with mRNA localization.</title>
        <authorList>
            <person name="Schuhmacher J.S."/>
            <person name="Tom Dieck S."/>
            <person name="Christoforidis S."/>
            <person name="Landerer C."/>
            <person name="Davila Gallesio J."/>
            <person name="Hersemann L."/>
            <person name="Seifert S."/>
            <person name="Schaefer R."/>
            <person name="Giner A."/>
            <person name="Toth-Petroczy A."/>
            <person name="Kalaidzidis Y."/>
            <person name="Bohnsack K.E."/>
            <person name="Bohnsack M.T."/>
            <person name="Schuman E.M."/>
            <person name="Zerial M."/>
        </authorList>
    </citation>
    <scope>SUBUNIT</scope>
    <scope>IDENTIFICATION IN THE FERRY COMPLEX</scope>
    <scope>FUNCTION</scope>
    <scope>SUBCELLULAR LOCATION</scope>
</reference>
<name>FERY3_HUMAN</name>
<protein>
    <recommendedName>
        <fullName evidence="7">Ferry endosomal RAB5 effector complex subunit 3</fullName>
        <shortName evidence="7">Fy-3</shortName>
    </recommendedName>
</protein>
<sequence>MKKNRERFCNREREFVYKFKVGSQCLELRVPLKFPVQENASHLHGRLMLLHSLPCFIEKDLKEALTQFIEEESLSDYDRDAEASLAAVKSGEVDLHQLASTWAKAYAETTLEHARPEEPSWDEDFADVYHDLIHSPASETLLNLEHNYFVSISELIGERDVELKKLRERQGIEMEKVMQELGKSLTDQDVNSLAAQHFESQQDLENKWSNELKQSTAIQKQEYQEWVIKLHQDLKNPNNSSLSEEIKVQPSQFRESVEAIGRIYEEQRKLEESFTIHLGAQLKTMHNLRLLRADMLDFCKHKRNHRSGVKLHRLQTALSLYSTSLCGLVLLVDNRINSYSGIKRDFATVCQECTDFHFPRIEEQLEVVQQVVLYARTQRRSKLKESLDSGNQNGGNDDKTKNAERNYLNVLPGEFYITRHSNLSEIHVAFHLCVDDHVKSGNITARDPAIMGLRNILKVCCTHDITTISIPLLLVHDMSEEMTIPWCLRRAELVFKCVKGFMMEMASWDGGISRTVQFLVPQSISEEMFYQLSNMLPQIFRVSSTLTLTSKH</sequence>
<feature type="chain" id="PRO_0000089842" description="Ferry endosomal RAB5 effector complex subunit 3">
    <location>
        <begin position="1"/>
        <end position="552"/>
    </location>
</feature>
<feature type="region of interest" description="Disordered" evidence="2">
    <location>
        <begin position="383"/>
        <end position="403"/>
    </location>
</feature>
<feature type="sequence variant" id="VAR_081778" description="In MRT66; dbSNP:rs1468772495." evidence="4">
    <original>L</original>
    <variation>P</variation>
    <location>
        <position position="328"/>
    </location>
</feature>
<feature type="sequence variant" id="VAR_081779" description="In MRT66." evidence="5">
    <location>
        <begin position="454"/>
        <end position="552"/>
    </location>
</feature>
<feature type="sequence conflict" description="In Ref. 2; CAE46058." evidence="8" ref="2">
    <original>Q</original>
    <variation>R</variation>
    <location>
        <position position="24"/>
    </location>
</feature>
<feature type="sequence conflict" description="In Ref. 2; CAE46058." evidence="8" ref="2">
    <original>I</original>
    <variation>V</variation>
    <location>
        <position position="156"/>
    </location>
</feature>
<feature type="sequence conflict" description="In Ref. 2; CAE46058." evidence="8" ref="2">
    <original>K</original>
    <variation>E</variation>
    <location>
        <position position="165"/>
    </location>
</feature>
<feature type="sequence conflict" description="In Ref. 2; CAE46058." evidence="8" ref="2">
    <original>E</original>
    <variation>G</variation>
    <location>
        <position position="245"/>
    </location>
</feature>
<feature type="sequence conflict" description="In Ref. 2; CAE46058." evidence="8" ref="2">
    <original>T</original>
    <variation>P</variation>
    <location>
        <position position="377"/>
    </location>
</feature>
<feature type="sequence conflict" description="In Ref. 2; CAE46058." evidence="8" ref="2">
    <original>I</original>
    <variation>V</variation>
    <location>
        <position position="465"/>
    </location>
</feature>
<gene>
    <name evidence="10" type="primary">FERRY3</name>
    <name type="synonym">C12orf4</name>
</gene>
<evidence type="ECO:0000250" key="1">
    <source>
        <dbReference type="UniProtKB" id="D4A770"/>
    </source>
</evidence>
<evidence type="ECO:0000256" key="2">
    <source>
        <dbReference type="SAM" id="MobiDB-lite"/>
    </source>
</evidence>
<evidence type="ECO:0000269" key="3">
    <source>
    </source>
</evidence>
<evidence type="ECO:0000269" key="4">
    <source>
    </source>
</evidence>
<evidence type="ECO:0000269" key="5">
    <source>
    </source>
</evidence>
<evidence type="ECO:0000269" key="6">
    <source>
    </source>
</evidence>
<evidence type="ECO:0000303" key="7">
    <source>
    </source>
</evidence>
<evidence type="ECO:0000305" key="8"/>
<evidence type="ECO:0000305" key="9">
    <source>
    </source>
</evidence>
<evidence type="ECO:0000312" key="10">
    <source>
        <dbReference type="HGNC" id="HGNC:1184"/>
    </source>
</evidence>
<accession>Q9NQ89</accession>
<accession>D3DUQ8</accession>
<accession>Q6MZH5</accession>
<comment type="function">
    <text evidence="1 6">Component of the FERRY complex (Five-subunit Endosomal Rab5 and RNA/ribosome intermediary) (PubMed:37267905). The FERRY complex directly interacts with mRNAs and RAB5A, and functions as a RAB5A effector involved in the localization and the distribution of specific mRNAs most likely by mediating their endosomal transport. The complex recruits mRNAs and ribosomes to early endosomes through direct mRNA-interaction (PubMed:37267905). Plays a role in mast cell degranulation.</text>
</comment>
<comment type="subunit">
    <text evidence="6">Component of the FERRY complex composed of five subunits, TBCK, PPP1R21, FERRY3, CRYZL1 and GATD1 with a ratio of 1:2:1:2:4, respectively.</text>
</comment>
<comment type="interaction">
    <interactant intactId="EBI-11090973">
        <id>Q9NQ89</id>
    </interactant>
    <interactant intactId="EBI-718729">
        <id>P55212</id>
        <label>CASP6</label>
    </interactant>
    <organismsDiffer>false</organismsDiffer>
    <experiments>3</experiments>
</comment>
<comment type="interaction">
    <interactant intactId="EBI-11090973">
        <id>Q9NQ89</id>
    </interactant>
    <interactant intactId="EBI-712096">
        <id>P30519</id>
        <label>HMOX2</label>
    </interactant>
    <organismsDiffer>false</organismsDiffer>
    <experiments>3</experiments>
</comment>
<comment type="interaction">
    <interactant intactId="EBI-11090973">
        <id>Q9NQ89</id>
    </interactant>
    <interactant intactId="EBI-21591415">
        <id>P13473-2</id>
        <label>LAMP2</label>
    </interactant>
    <organismsDiffer>false</organismsDiffer>
    <experiments>3</experiments>
</comment>
<comment type="interaction">
    <interactant intactId="EBI-11090973">
        <id>Q9NQ89</id>
    </interactant>
    <interactant intactId="EBI-5235703">
        <id>Q6ZMI0</id>
        <label>PPP1R21</label>
    </interactant>
    <organismsDiffer>false</organismsDiffer>
    <experiments>6</experiments>
</comment>
<comment type="interaction">
    <interactant intactId="EBI-11090973">
        <id>Q9NQ89</id>
    </interactant>
    <interactant intactId="EBI-5280197">
        <id>O75400-2</id>
        <label>PRPF40A</label>
    </interactant>
    <organismsDiffer>false</organismsDiffer>
    <experiments>3</experiments>
</comment>
<comment type="interaction">
    <interactant intactId="EBI-11090973">
        <id>Q9NQ89</id>
    </interactant>
    <interactant intactId="EBI-2623095">
        <id>Q9Y371</id>
        <label>SH3GLB1</label>
    </interactant>
    <organismsDiffer>false</organismsDiffer>
    <experiments>3</experiments>
</comment>
<comment type="subcellular location">
    <subcellularLocation>
        <location evidence="1">Cytoplasm</location>
    </subcellularLocation>
    <subcellularLocation>
        <location evidence="9">Early endosome</location>
    </subcellularLocation>
</comment>
<comment type="disease" evidence="3 4 5">
    <disease id="DI-05434">
        <name>Intellectual developmental disorder, autosomal recessive 66</name>
        <acronym>MRT66</acronym>
        <description>A disorder characterized by significantly below average general intellectual functioning associated with impairments in adaptive behavior and manifested during the developmental period. MRT66 patients have intellectual disability, delayed speech development, neuropsychiatric symptoms, and relatively normal life span.</description>
        <dbReference type="MIM" id="618221"/>
    </disease>
    <text>The disease is caused by variants affecting the gene represented in this entry.</text>
</comment>